<name>CLPP_SHISS</name>
<dbReference type="EC" id="3.4.21.92" evidence="1"/>
<dbReference type="EMBL" id="CP000038">
    <property type="protein sequence ID" value="AAZ87196.1"/>
    <property type="molecule type" value="Genomic_DNA"/>
</dbReference>
<dbReference type="RefSeq" id="WP_000122253.1">
    <property type="nucleotide sequence ID" value="NC_007384.1"/>
</dbReference>
<dbReference type="SMR" id="Q3Z4W6"/>
<dbReference type="MEROPS" id="S14.001"/>
<dbReference type="GeneID" id="93777017"/>
<dbReference type="KEGG" id="ssn:SSON_0420"/>
<dbReference type="HOGENOM" id="CLU_058707_3_2_6"/>
<dbReference type="Proteomes" id="UP000002529">
    <property type="component" value="Chromosome"/>
</dbReference>
<dbReference type="GO" id="GO:0005737">
    <property type="term" value="C:cytoplasm"/>
    <property type="evidence" value="ECO:0007669"/>
    <property type="project" value="UniProtKB-SubCell"/>
</dbReference>
<dbReference type="GO" id="GO:0009368">
    <property type="term" value="C:endopeptidase Clp complex"/>
    <property type="evidence" value="ECO:0007669"/>
    <property type="project" value="TreeGrafter"/>
</dbReference>
<dbReference type="GO" id="GO:0004176">
    <property type="term" value="F:ATP-dependent peptidase activity"/>
    <property type="evidence" value="ECO:0007669"/>
    <property type="project" value="InterPro"/>
</dbReference>
<dbReference type="GO" id="GO:0051117">
    <property type="term" value="F:ATPase binding"/>
    <property type="evidence" value="ECO:0007669"/>
    <property type="project" value="TreeGrafter"/>
</dbReference>
<dbReference type="GO" id="GO:0004252">
    <property type="term" value="F:serine-type endopeptidase activity"/>
    <property type="evidence" value="ECO:0007669"/>
    <property type="project" value="UniProtKB-UniRule"/>
</dbReference>
<dbReference type="GO" id="GO:0006515">
    <property type="term" value="P:protein quality control for misfolded or incompletely synthesized proteins"/>
    <property type="evidence" value="ECO:0007669"/>
    <property type="project" value="TreeGrafter"/>
</dbReference>
<dbReference type="CDD" id="cd07017">
    <property type="entry name" value="S14_ClpP_2"/>
    <property type="match status" value="1"/>
</dbReference>
<dbReference type="FunFam" id="3.90.226.10:FF:000001">
    <property type="entry name" value="ATP-dependent Clp protease proteolytic subunit"/>
    <property type="match status" value="1"/>
</dbReference>
<dbReference type="Gene3D" id="3.90.226.10">
    <property type="entry name" value="2-enoyl-CoA Hydratase, Chain A, domain 1"/>
    <property type="match status" value="1"/>
</dbReference>
<dbReference type="HAMAP" id="MF_00444">
    <property type="entry name" value="ClpP"/>
    <property type="match status" value="1"/>
</dbReference>
<dbReference type="InterPro" id="IPR001907">
    <property type="entry name" value="ClpP"/>
</dbReference>
<dbReference type="InterPro" id="IPR029045">
    <property type="entry name" value="ClpP/crotonase-like_dom_sf"/>
</dbReference>
<dbReference type="InterPro" id="IPR023562">
    <property type="entry name" value="ClpP/TepA"/>
</dbReference>
<dbReference type="InterPro" id="IPR033135">
    <property type="entry name" value="ClpP_His_AS"/>
</dbReference>
<dbReference type="InterPro" id="IPR018215">
    <property type="entry name" value="ClpP_Ser_AS"/>
</dbReference>
<dbReference type="NCBIfam" id="TIGR00493">
    <property type="entry name" value="clpP"/>
    <property type="match status" value="1"/>
</dbReference>
<dbReference type="NCBIfam" id="NF001368">
    <property type="entry name" value="PRK00277.1"/>
    <property type="match status" value="1"/>
</dbReference>
<dbReference type="NCBIfam" id="NF009205">
    <property type="entry name" value="PRK12553.1"/>
    <property type="match status" value="1"/>
</dbReference>
<dbReference type="PANTHER" id="PTHR10381">
    <property type="entry name" value="ATP-DEPENDENT CLP PROTEASE PROTEOLYTIC SUBUNIT"/>
    <property type="match status" value="1"/>
</dbReference>
<dbReference type="PANTHER" id="PTHR10381:SF70">
    <property type="entry name" value="ATP-DEPENDENT CLP PROTEASE PROTEOLYTIC SUBUNIT"/>
    <property type="match status" value="1"/>
</dbReference>
<dbReference type="Pfam" id="PF00574">
    <property type="entry name" value="CLP_protease"/>
    <property type="match status" value="1"/>
</dbReference>
<dbReference type="PRINTS" id="PR00127">
    <property type="entry name" value="CLPPROTEASEP"/>
</dbReference>
<dbReference type="SUPFAM" id="SSF52096">
    <property type="entry name" value="ClpP/crotonase"/>
    <property type="match status" value="1"/>
</dbReference>
<dbReference type="PROSITE" id="PS00382">
    <property type="entry name" value="CLP_PROTEASE_HIS"/>
    <property type="match status" value="1"/>
</dbReference>
<dbReference type="PROSITE" id="PS00381">
    <property type="entry name" value="CLP_PROTEASE_SER"/>
    <property type="match status" value="1"/>
</dbReference>
<reference key="1">
    <citation type="journal article" date="2005" name="Nucleic Acids Res.">
        <title>Genome dynamics and diversity of Shigella species, the etiologic agents of bacillary dysentery.</title>
        <authorList>
            <person name="Yang F."/>
            <person name="Yang J."/>
            <person name="Zhang X."/>
            <person name="Chen L."/>
            <person name="Jiang Y."/>
            <person name="Yan Y."/>
            <person name="Tang X."/>
            <person name="Wang J."/>
            <person name="Xiong Z."/>
            <person name="Dong J."/>
            <person name="Xue Y."/>
            <person name="Zhu Y."/>
            <person name="Xu X."/>
            <person name="Sun L."/>
            <person name="Chen S."/>
            <person name="Nie H."/>
            <person name="Peng J."/>
            <person name="Xu J."/>
            <person name="Wang Y."/>
            <person name="Yuan Z."/>
            <person name="Wen Y."/>
            <person name="Yao Z."/>
            <person name="Shen Y."/>
            <person name="Qiang B."/>
            <person name="Hou Y."/>
            <person name="Yu J."/>
            <person name="Jin Q."/>
        </authorList>
    </citation>
    <scope>NUCLEOTIDE SEQUENCE [LARGE SCALE GENOMIC DNA]</scope>
    <source>
        <strain>Ss046</strain>
    </source>
</reference>
<gene>
    <name evidence="1" type="primary">clpP</name>
    <name type="ordered locus">SSON_0420</name>
</gene>
<accession>Q3Z4W6</accession>
<evidence type="ECO:0000255" key="1">
    <source>
        <dbReference type="HAMAP-Rule" id="MF_00444"/>
    </source>
</evidence>
<feature type="chain" id="PRO_0000226469" description="ATP-dependent Clp protease proteolytic subunit">
    <location>
        <begin position="1"/>
        <end position="207"/>
    </location>
</feature>
<feature type="active site" description="Nucleophile" evidence="1">
    <location>
        <position position="111"/>
    </location>
</feature>
<feature type="active site" evidence="1">
    <location>
        <position position="136"/>
    </location>
</feature>
<comment type="function">
    <text evidence="1">Cleaves peptides in various proteins in a process that requires ATP hydrolysis. Has a chymotrypsin-like activity. Plays a major role in the degradation of misfolded proteins.</text>
</comment>
<comment type="catalytic activity">
    <reaction evidence="1">
        <text>Hydrolysis of proteins to small peptides in the presence of ATP and magnesium. alpha-casein is the usual test substrate. In the absence of ATP, only oligopeptides shorter than five residues are hydrolyzed (such as succinyl-Leu-Tyr-|-NHMec, and Leu-Tyr-Leu-|-Tyr-Trp, in which cleavage of the -Tyr-|-Leu- and -Tyr-|-Trp bonds also occurs).</text>
        <dbReference type="EC" id="3.4.21.92"/>
    </reaction>
</comment>
<comment type="subunit">
    <text evidence="1">Fourteen ClpP subunits assemble into 2 heptameric rings which stack back to back to give a disk-like structure with a central cavity, resembling the structure of eukaryotic proteasomes. Component of the ClpAP and ClpXP complexes.</text>
</comment>
<comment type="subcellular location">
    <subcellularLocation>
        <location evidence="1">Cytoplasm</location>
    </subcellularLocation>
</comment>
<comment type="similarity">
    <text evidence="1">Belongs to the peptidase S14 family.</text>
</comment>
<sequence>MSYSGERDNFAPHMALVPMVIEQTSRGERSFDIYSRLLKERVIFLTGQVEDHMANLIVAQMLFLEAENPEKDIYLYINSPGGVITAGMSIYDTMQFIKPDVSTICMGQAASMGAFLLTAGAKGKRFCLPNSRVMIHQPLGGYQGQATDIEIHAREILKVKGRMNELMALHTGQSLEQIERDTERDRFLSAPEAVEYGLVDSILTHRN</sequence>
<organism>
    <name type="scientific">Shigella sonnei (strain Ss046)</name>
    <dbReference type="NCBI Taxonomy" id="300269"/>
    <lineage>
        <taxon>Bacteria</taxon>
        <taxon>Pseudomonadati</taxon>
        <taxon>Pseudomonadota</taxon>
        <taxon>Gammaproteobacteria</taxon>
        <taxon>Enterobacterales</taxon>
        <taxon>Enterobacteriaceae</taxon>
        <taxon>Shigella</taxon>
    </lineage>
</organism>
<proteinExistence type="inferred from homology"/>
<keyword id="KW-0963">Cytoplasm</keyword>
<keyword id="KW-0378">Hydrolase</keyword>
<keyword id="KW-0645">Protease</keyword>
<keyword id="KW-1185">Reference proteome</keyword>
<keyword id="KW-0720">Serine protease</keyword>
<protein>
    <recommendedName>
        <fullName evidence="1">ATP-dependent Clp protease proteolytic subunit</fullName>
        <ecNumber evidence="1">3.4.21.92</ecNumber>
    </recommendedName>
    <alternativeName>
        <fullName evidence="1">Endopeptidase Clp</fullName>
    </alternativeName>
</protein>